<sequence length="232" mass="24031">MAKLGKRARAAREAFAGKENVTVEEAVALIKANSSVKFDETVEIAMNLGVDPRHADQMVRGVVGLPNGTGKTVRVAVFARGAKADEATAAGADIVGAEDLMETVQSGKIEFDRCIATPDMMPIVGRLGKVLGPRNLMPNPKVGTVTMDVEAAVKAAKGGEVQFKAEKGGVVHAGVGKLSFDEAKLVENIRAFVGAVSKAKPTGAKGAYMKKIALSSTMGPGVSVAIEDANVE</sequence>
<organism>
    <name type="scientific">Roseobacter denitrificans (strain ATCC 33942 / OCh 114)</name>
    <name type="common">Erythrobacter sp. (strain OCh 114)</name>
    <name type="synonym">Roseobacter denitrificans</name>
    <dbReference type="NCBI Taxonomy" id="375451"/>
    <lineage>
        <taxon>Bacteria</taxon>
        <taxon>Pseudomonadati</taxon>
        <taxon>Pseudomonadota</taxon>
        <taxon>Alphaproteobacteria</taxon>
        <taxon>Rhodobacterales</taxon>
        <taxon>Roseobacteraceae</taxon>
        <taxon>Roseobacter</taxon>
    </lineage>
</organism>
<name>RL1_ROSDO</name>
<proteinExistence type="inferred from homology"/>
<accession>Q160X4</accession>
<comment type="function">
    <text evidence="1">Binds directly to 23S rRNA. The L1 stalk is quite mobile in the ribosome, and is involved in E site tRNA release.</text>
</comment>
<comment type="function">
    <text evidence="1">Protein L1 is also a translational repressor protein, it controls the translation of the L11 operon by binding to its mRNA.</text>
</comment>
<comment type="subunit">
    <text evidence="1">Part of the 50S ribosomal subunit.</text>
</comment>
<comment type="similarity">
    <text evidence="1">Belongs to the universal ribosomal protein uL1 family.</text>
</comment>
<gene>
    <name evidence="1" type="primary">rplA</name>
    <name type="ordered locus">RD1_4022</name>
</gene>
<reference key="1">
    <citation type="journal article" date="2007" name="J. Bacteriol.">
        <title>The complete genome sequence of Roseobacter denitrificans reveals a mixotrophic rather than photosynthetic metabolism.</title>
        <authorList>
            <person name="Swingley W.D."/>
            <person name="Sadekar S."/>
            <person name="Mastrian S.D."/>
            <person name="Matthies H.J."/>
            <person name="Hao J."/>
            <person name="Ramos H."/>
            <person name="Acharya C.R."/>
            <person name="Conrad A.L."/>
            <person name="Taylor H.L."/>
            <person name="Dejesa L.C."/>
            <person name="Shah M.K."/>
            <person name="O'Huallachain M.E."/>
            <person name="Lince M.T."/>
            <person name="Blankenship R.E."/>
            <person name="Beatty J.T."/>
            <person name="Touchman J.W."/>
        </authorList>
    </citation>
    <scope>NUCLEOTIDE SEQUENCE [LARGE SCALE GENOMIC DNA]</scope>
    <source>
        <strain>ATCC 33942 / OCh 114</strain>
    </source>
</reference>
<feature type="chain" id="PRO_0000308092" description="Large ribosomal subunit protein uL1">
    <location>
        <begin position="1"/>
        <end position="232"/>
    </location>
</feature>
<dbReference type="EMBL" id="CP000362">
    <property type="protein sequence ID" value="ABG33469.1"/>
    <property type="molecule type" value="Genomic_DNA"/>
</dbReference>
<dbReference type="RefSeq" id="WP_011570079.1">
    <property type="nucleotide sequence ID" value="NC_008209.1"/>
</dbReference>
<dbReference type="SMR" id="Q160X4"/>
<dbReference type="STRING" id="375451.RD1_4022"/>
<dbReference type="KEGG" id="rde:RD1_4022"/>
<dbReference type="eggNOG" id="COG0081">
    <property type="taxonomic scope" value="Bacteria"/>
</dbReference>
<dbReference type="HOGENOM" id="CLU_062853_0_0_5"/>
<dbReference type="OrthoDB" id="9803740at2"/>
<dbReference type="Proteomes" id="UP000007029">
    <property type="component" value="Chromosome"/>
</dbReference>
<dbReference type="GO" id="GO:0022625">
    <property type="term" value="C:cytosolic large ribosomal subunit"/>
    <property type="evidence" value="ECO:0007669"/>
    <property type="project" value="TreeGrafter"/>
</dbReference>
<dbReference type="GO" id="GO:0019843">
    <property type="term" value="F:rRNA binding"/>
    <property type="evidence" value="ECO:0007669"/>
    <property type="project" value="UniProtKB-UniRule"/>
</dbReference>
<dbReference type="GO" id="GO:0003735">
    <property type="term" value="F:structural constituent of ribosome"/>
    <property type="evidence" value="ECO:0007669"/>
    <property type="project" value="InterPro"/>
</dbReference>
<dbReference type="GO" id="GO:0000049">
    <property type="term" value="F:tRNA binding"/>
    <property type="evidence" value="ECO:0007669"/>
    <property type="project" value="UniProtKB-KW"/>
</dbReference>
<dbReference type="GO" id="GO:0006417">
    <property type="term" value="P:regulation of translation"/>
    <property type="evidence" value="ECO:0007669"/>
    <property type="project" value="UniProtKB-KW"/>
</dbReference>
<dbReference type="GO" id="GO:0006412">
    <property type="term" value="P:translation"/>
    <property type="evidence" value="ECO:0007669"/>
    <property type="project" value="UniProtKB-UniRule"/>
</dbReference>
<dbReference type="CDD" id="cd00403">
    <property type="entry name" value="Ribosomal_L1"/>
    <property type="match status" value="1"/>
</dbReference>
<dbReference type="FunFam" id="3.40.50.790:FF:000001">
    <property type="entry name" value="50S ribosomal protein L1"/>
    <property type="match status" value="1"/>
</dbReference>
<dbReference type="Gene3D" id="3.30.190.20">
    <property type="match status" value="1"/>
</dbReference>
<dbReference type="Gene3D" id="3.40.50.790">
    <property type="match status" value="1"/>
</dbReference>
<dbReference type="HAMAP" id="MF_01318_B">
    <property type="entry name" value="Ribosomal_uL1_B"/>
    <property type="match status" value="1"/>
</dbReference>
<dbReference type="InterPro" id="IPR005878">
    <property type="entry name" value="Ribosom_uL1_bac-type"/>
</dbReference>
<dbReference type="InterPro" id="IPR002143">
    <property type="entry name" value="Ribosomal_uL1"/>
</dbReference>
<dbReference type="InterPro" id="IPR023674">
    <property type="entry name" value="Ribosomal_uL1-like"/>
</dbReference>
<dbReference type="InterPro" id="IPR028364">
    <property type="entry name" value="Ribosomal_uL1/biogenesis"/>
</dbReference>
<dbReference type="InterPro" id="IPR016095">
    <property type="entry name" value="Ribosomal_uL1_3-a/b-sand"/>
</dbReference>
<dbReference type="InterPro" id="IPR023673">
    <property type="entry name" value="Ribosomal_uL1_CS"/>
</dbReference>
<dbReference type="NCBIfam" id="TIGR01169">
    <property type="entry name" value="rplA_bact"/>
    <property type="match status" value="1"/>
</dbReference>
<dbReference type="PANTHER" id="PTHR36427">
    <property type="entry name" value="54S RIBOSOMAL PROTEIN L1, MITOCHONDRIAL"/>
    <property type="match status" value="1"/>
</dbReference>
<dbReference type="PANTHER" id="PTHR36427:SF3">
    <property type="entry name" value="LARGE RIBOSOMAL SUBUNIT PROTEIN UL1M"/>
    <property type="match status" value="1"/>
</dbReference>
<dbReference type="Pfam" id="PF00687">
    <property type="entry name" value="Ribosomal_L1"/>
    <property type="match status" value="1"/>
</dbReference>
<dbReference type="PIRSF" id="PIRSF002155">
    <property type="entry name" value="Ribosomal_L1"/>
    <property type="match status" value="1"/>
</dbReference>
<dbReference type="SUPFAM" id="SSF56808">
    <property type="entry name" value="Ribosomal protein L1"/>
    <property type="match status" value="1"/>
</dbReference>
<dbReference type="PROSITE" id="PS01199">
    <property type="entry name" value="RIBOSOMAL_L1"/>
    <property type="match status" value="1"/>
</dbReference>
<keyword id="KW-1185">Reference proteome</keyword>
<keyword id="KW-0678">Repressor</keyword>
<keyword id="KW-0687">Ribonucleoprotein</keyword>
<keyword id="KW-0689">Ribosomal protein</keyword>
<keyword id="KW-0694">RNA-binding</keyword>
<keyword id="KW-0699">rRNA-binding</keyword>
<keyword id="KW-0810">Translation regulation</keyword>
<keyword id="KW-0820">tRNA-binding</keyword>
<protein>
    <recommendedName>
        <fullName evidence="1">Large ribosomal subunit protein uL1</fullName>
    </recommendedName>
    <alternativeName>
        <fullName evidence="2">50S ribosomal protein L1</fullName>
    </alternativeName>
</protein>
<evidence type="ECO:0000255" key="1">
    <source>
        <dbReference type="HAMAP-Rule" id="MF_01318"/>
    </source>
</evidence>
<evidence type="ECO:0000305" key="2"/>